<comment type="function">
    <text evidence="1">Involved in pyrimidine catabolism. Catalyzes the deamination of 3-aminoacrylate to malonic semialdehyde, a reaction that can also occur spontaneously. RutC may facilitate the reaction and modulate the metabolic fitness, rather than catalyzing essential functions.</text>
</comment>
<comment type="catalytic activity">
    <reaction evidence="1">
        <text>(Z)-3-aminoacrylate + H2O + H(+) = 3-oxopropanoate + NH4(+)</text>
        <dbReference type="Rhea" id="RHEA:34947"/>
        <dbReference type="ChEBI" id="CHEBI:15377"/>
        <dbReference type="ChEBI" id="CHEBI:15378"/>
        <dbReference type="ChEBI" id="CHEBI:28938"/>
        <dbReference type="ChEBI" id="CHEBI:33190"/>
        <dbReference type="ChEBI" id="CHEBI:59894"/>
    </reaction>
</comment>
<comment type="similarity">
    <text evidence="1">Belongs to the RutC family.</text>
</comment>
<feature type="chain" id="PRO_0000402719" description="3-aminoacrylate deaminase RutC">
    <location>
        <begin position="1"/>
        <end position="132"/>
    </location>
</feature>
<gene>
    <name evidence="1" type="primary">rutC</name>
    <name type="ordered locus">ESA_02364</name>
</gene>
<proteinExistence type="inferred from homology"/>
<organism>
    <name type="scientific">Cronobacter sakazakii (strain ATCC BAA-894)</name>
    <name type="common">Enterobacter sakazakii</name>
    <dbReference type="NCBI Taxonomy" id="290339"/>
    <lineage>
        <taxon>Bacteria</taxon>
        <taxon>Pseudomonadati</taxon>
        <taxon>Pseudomonadota</taxon>
        <taxon>Gammaproteobacteria</taxon>
        <taxon>Enterobacterales</taxon>
        <taxon>Enterobacteriaceae</taxon>
        <taxon>Cronobacter</taxon>
    </lineage>
</organism>
<sequence length="132" mass="14117">MPKQVIIPPGTSTPIAPFVPGTLADGVVYVSGTLPFDSANNVVYPGDPKAQTRHVLETIRRVIETAGGTMEDVTFNSIFITDWKNYAAINEIYAEFFPGDKPARFCIQCGLVKPEALVEIATVAHIGQPGGA</sequence>
<evidence type="ECO:0000255" key="1">
    <source>
        <dbReference type="HAMAP-Rule" id="MF_00831"/>
    </source>
</evidence>
<accession>A7ME54</accession>
<dbReference type="EC" id="3.5.-.-" evidence="1"/>
<dbReference type="EMBL" id="CP000783">
    <property type="protein sequence ID" value="ABU77611.1"/>
    <property type="molecule type" value="Genomic_DNA"/>
</dbReference>
<dbReference type="RefSeq" id="WP_004385399.1">
    <property type="nucleotide sequence ID" value="NC_009778.1"/>
</dbReference>
<dbReference type="SMR" id="A7ME54"/>
<dbReference type="KEGG" id="esa:ESA_02364"/>
<dbReference type="HOGENOM" id="CLU_100715_7_3_6"/>
<dbReference type="Proteomes" id="UP000000260">
    <property type="component" value="Chromosome"/>
</dbReference>
<dbReference type="GO" id="GO:0005829">
    <property type="term" value="C:cytosol"/>
    <property type="evidence" value="ECO:0007669"/>
    <property type="project" value="TreeGrafter"/>
</dbReference>
<dbReference type="GO" id="GO:0019239">
    <property type="term" value="F:deaminase activity"/>
    <property type="evidence" value="ECO:0007669"/>
    <property type="project" value="TreeGrafter"/>
</dbReference>
<dbReference type="GO" id="GO:0019740">
    <property type="term" value="P:nitrogen utilization"/>
    <property type="evidence" value="ECO:0007669"/>
    <property type="project" value="UniProtKB-UniRule"/>
</dbReference>
<dbReference type="GO" id="GO:0006212">
    <property type="term" value="P:uracil catabolic process"/>
    <property type="evidence" value="ECO:0007669"/>
    <property type="project" value="UniProtKB-UniRule"/>
</dbReference>
<dbReference type="CDD" id="cd00448">
    <property type="entry name" value="YjgF_YER057c_UK114_family"/>
    <property type="match status" value="1"/>
</dbReference>
<dbReference type="Gene3D" id="3.30.1330.40">
    <property type="entry name" value="RutC-like"/>
    <property type="match status" value="1"/>
</dbReference>
<dbReference type="HAMAP" id="MF_00831">
    <property type="entry name" value="RutC"/>
    <property type="match status" value="1"/>
</dbReference>
<dbReference type="InterPro" id="IPR019897">
    <property type="entry name" value="RidA_CS"/>
</dbReference>
<dbReference type="InterPro" id="IPR019898">
    <property type="entry name" value="RutC"/>
</dbReference>
<dbReference type="InterPro" id="IPR035959">
    <property type="entry name" value="RutC-like_sf"/>
</dbReference>
<dbReference type="InterPro" id="IPR006175">
    <property type="entry name" value="YjgF/YER057c/UK114"/>
</dbReference>
<dbReference type="NCBIfam" id="TIGR03610">
    <property type="entry name" value="RutC"/>
    <property type="match status" value="1"/>
</dbReference>
<dbReference type="PANTHER" id="PTHR11803">
    <property type="entry name" value="2-IMINOBUTANOATE/2-IMINOPROPANOATE DEAMINASE RIDA"/>
    <property type="match status" value="1"/>
</dbReference>
<dbReference type="PANTHER" id="PTHR11803:SF58">
    <property type="entry name" value="PROTEIN HMF1-RELATED"/>
    <property type="match status" value="1"/>
</dbReference>
<dbReference type="Pfam" id="PF01042">
    <property type="entry name" value="Ribonuc_L-PSP"/>
    <property type="match status" value="1"/>
</dbReference>
<dbReference type="SUPFAM" id="SSF55298">
    <property type="entry name" value="YjgF-like"/>
    <property type="match status" value="1"/>
</dbReference>
<dbReference type="PROSITE" id="PS01094">
    <property type="entry name" value="UPF0076"/>
    <property type="match status" value="1"/>
</dbReference>
<reference key="1">
    <citation type="journal article" date="2010" name="PLoS ONE">
        <title>Genome sequence of Cronobacter sakazakii BAA-894 and comparative genomic hybridization analysis with other Cronobacter species.</title>
        <authorList>
            <person name="Kucerova E."/>
            <person name="Clifton S.W."/>
            <person name="Xia X.Q."/>
            <person name="Long F."/>
            <person name="Porwollik S."/>
            <person name="Fulton L."/>
            <person name="Fronick C."/>
            <person name="Minx P."/>
            <person name="Kyung K."/>
            <person name="Warren W."/>
            <person name="Fulton R."/>
            <person name="Feng D."/>
            <person name="Wollam A."/>
            <person name="Shah N."/>
            <person name="Bhonagiri V."/>
            <person name="Nash W.E."/>
            <person name="Hallsworth-Pepin K."/>
            <person name="Wilson R.K."/>
            <person name="McClelland M."/>
            <person name="Forsythe S.J."/>
        </authorList>
    </citation>
    <scope>NUCLEOTIDE SEQUENCE [LARGE SCALE GENOMIC DNA]</scope>
    <source>
        <strain>ATCC BAA-894</strain>
    </source>
</reference>
<name>RUTC_CROS8</name>
<keyword id="KW-0378">Hydrolase</keyword>
<keyword id="KW-1185">Reference proteome</keyword>
<protein>
    <recommendedName>
        <fullName evidence="1">3-aminoacrylate deaminase RutC</fullName>
        <shortName evidence="1">3-AA deaminase</shortName>
        <ecNumber evidence="1">3.5.-.-</ecNumber>
    </recommendedName>
</protein>